<dbReference type="EMBL" id="Z97018">
    <property type="protein sequence ID" value="CAB09694.1"/>
    <property type="molecule type" value="mRNA"/>
</dbReference>
<dbReference type="EMBL" id="AJ416473">
    <property type="protein sequence ID" value="CAC94925.1"/>
    <property type="molecule type" value="mRNA"/>
</dbReference>
<dbReference type="EMBL" id="AK088886">
    <property type="protein sequence ID" value="BAC40632.1"/>
    <property type="molecule type" value="mRNA"/>
</dbReference>
<dbReference type="EMBL" id="AK145111">
    <property type="protein sequence ID" value="BAE26240.1"/>
    <property type="molecule type" value="mRNA"/>
</dbReference>
<dbReference type="EMBL" id="AK145361">
    <property type="protein sequence ID" value="BAE26388.1"/>
    <property type="molecule type" value="mRNA"/>
</dbReference>
<dbReference type="EMBL" id="AK161470">
    <property type="protein sequence ID" value="BAE36414.1"/>
    <property type="molecule type" value="mRNA"/>
</dbReference>
<dbReference type="EMBL" id="BC029748">
    <property type="protein sequence ID" value="AAH29748.1"/>
    <property type="molecule type" value="mRNA"/>
</dbReference>
<dbReference type="CCDS" id="CCDS20517.1">
    <molecule id="O09012-1"/>
</dbReference>
<dbReference type="CCDS" id="CCDS20518.1">
    <molecule id="O09012-2"/>
</dbReference>
<dbReference type="RefSeq" id="NP_001264259.1">
    <molecule id="O09012-2"/>
    <property type="nucleotide sequence ID" value="NM_001277330.2"/>
</dbReference>
<dbReference type="RefSeq" id="NP_001264734.1">
    <molecule id="O09012-1"/>
    <property type="nucleotide sequence ID" value="NM_001277805.2"/>
</dbReference>
<dbReference type="RefSeq" id="NP_001347499.1">
    <molecule id="O09012-2"/>
    <property type="nucleotide sequence ID" value="NM_001360570.2"/>
</dbReference>
<dbReference type="RefSeq" id="NP_001397208.1">
    <molecule id="O09012-1"/>
    <property type="nucleotide sequence ID" value="NM_001410279.1"/>
</dbReference>
<dbReference type="RefSeq" id="NP_001397209.1">
    <molecule id="O09012-1"/>
    <property type="nucleotide sequence ID" value="NM_001410280.1"/>
</dbReference>
<dbReference type="RefSeq" id="NP_033021.2">
    <molecule id="O09012-1"/>
    <property type="nucleotide sequence ID" value="NM_008995.3"/>
</dbReference>
<dbReference type="RefSeq" id="NP_787947.1">
    <molecule id="O09012-2"/>
    <property type="nucleotide sequence ID" value="NM_175933.3"/>
</dbReference>
<dbReference type="RefSeq" id="XP_006505821.1">
    <property type="nucleotide sequence ID" value="XM_006505758.3"/>
</dbReference>
<dbReference type="RefSeq" id="XP_006505822.1">
    <property type="nucleotide sequence ID" value="XM_006505759.3"/>
</dbReference>
<dbReference type="RefSeq" id="XP_017176951.1">
    <property type="nucleotide sequence ID" value="XM_017321462.1"/>
</dbReference>
<dbReference type="SMR" id="O09012"/>
<dbReference type="BioGRID" id="202526">
    <property type="interactions" value="6"/>
</dbReference>
<dbReference type="FunCoup" id="O09012">
    <property type="interactions" value="1678"/>
</dbReference>
<dbReference type="IntAct" id="O09012">
    <property type="interactions" value="7"/>
</dbReference>
<dbReference type="MINT" id="O09012"/>
<dbReference type="STRING" id="10090.ENSMUSP00000108151"/>
<dbReference type="TCDB" id="3.A.20.1.1">
    <property type="family name" value="the peroxisomal protein importer (ppi) family"/>
</dbReference>
<dbReference type="GlyGen" id="O09012">
    <property type="glycosylation" value="2 sites, 1 O-linked glycan (2 sites)"/>
</dbReference>
<dbReference type="iPTMnet" id="O09012"/>
<dbReference type="PhosphoSitePlus" id="O09012"/>
<dbReference type="SwissPalm" id="O09012"/>
<dbReference type="jPOST" id="O09012"/>
<dbReference type="PaxDb" id="10090-ENSMUSP00000079398"/>
<dbReference type="PeptideAtlas" id="O09012"/>
<dbReference type="ProteomicsDB" id="288042">
    <molecule id="O09012-1"/>
</dbReference>
<dbReference type="ProteomicsDB" id="288043">
    <molecule id="O09012-2"/>
</dbReference>
<dbReference type="Pumba" id="O09012"/>
<dbReference type="Antibodypedia" id="22900">
    <property type="antibodies" value="291 antibodies from 33 providers"/>
</dbReference>
<dbReference type="DNASU" id="19305"/>
<dbReference type="Ensembl" id="ENSMUST00000035861.6">
    <molecule id="O09012-1"/>
    <property type="protein sequence ID" value="ENSMUSP00000049132.6"/>
    <property type="gene ID" value="ENSMUSG00000005069.13"/>
</dbReference>
<dbReference type="Ensembl" id="ENSMUST00000080557.12">
    <molecule id="O09012-2"/>
    <property type="protein sequence ID" value="ENSMUSP00000079398.6"/>
    <property type="gene ID" value="ENSMUSG00000005069.13"/>
</dbReference>
<dbReference type="Ensembl" id="ENSMUST00000112531.8">
    <molecule id="O09012-2"/>
    <property type="protein sequence ID" value="ENSMUSP00000108150.2"/>
    <property type="gene ID" value="ENSMUSG00000005069.13"/>
</dbReference>
<dbReference type="Ensembl" id="ENSMUST00000112532.8">
    <molecule id="O09012-1"/>
    <property type="protein sequence ID" value="ENSMUSP00000108151.2"/>
    <property type="gene ID" value="ENSMUSG00000005069.13"/>
</dbReference>
<dbReference type="GeneID" id="19305"/>
<dbReference type="KEGG" id="mmu:19305"/>
<dbReference type="UCSC" id="uc009dqs.1">
    <molecule id="O09012-1"/>
    <property type="organism name" value="mouse"/>
</dbReference>
<dbReference type="UCSC" id="uc009dqt.1">
    <molecule id="O09012-2"/>
    <property type="organism name" value="mouse"/>
</dbReference>
<dbReference type="AGR" id="MGI:1098808"/>
<dbReference type="CTD" id="5830"/>
<dbReference type="MGI" id="MGI:1098808">
    <property type="gene designation" value="Pex5"/>
</dbReference>
<dbReference type="VEuPathDB" id="HostDB:ENSMUSG00000005069"/>
<dbReference type="eggNOG" id="KOG1125">
    <property type="taxonomic scope" value="Eukaryota"/>
</dbReference>
<dbReference type="GeneTree" id="ENSGT00940000156605"/>
<dbReference type="HOGENOM" id="CLU_013516_4_0_1"/>
<dbReference type="InParanoid" id="O09012"/>
<dbReference type="OMA" id="NYRMKGP"/>
<dbReference type="OrthoDB" id="10006023at2759"/>
<dbReference type="PhylomeDB" id="O09012"/>
<dbReference type="TreeFam" id="TF315044"/>
<dbReference type="Reactome" id="R-MMU-8866654">
    <molecule id="O09012-1"/>
    <property type="pathway name" value="E3 ubiquitin ligases ubiquitinate target proteins"/>
</dbReference>
<dbReference type="Reactome" id="R-MMU-9033241">
    <molecule id="O09012-1"/>
    <property type="pathway name" value="Peroxisomal protein import"/>
</dbReference>
<dbReference type="Reactome" id="R-MMU-9664873">
    <molecule id="O09012-1"/>
    <property type="pathway name" value="Pexophagy"/>
</dbReference>
<dbReference type="BioGRID-ORCS" id="19305">
    <property type="hits" value="10 hits in 76 CRISPR screens"/>
</dbReference>
<dbReference type="CD-CODE" id="CE726F99">
    <property type="entry name" value="Postsynaptic density"/>
</dbReference>
<dbReference type="ChiTaRS" id="Pex5">
    <property type="organism name" value="mouse"/>
</dbReference>
<dbReference type="PRO" id="PR:O09012"/>
<dbReference type="Proteomes" id="UP000000589">
    <property type="component" value="Chromosome 6"/>
</dbReference>
<dbReference type="RNAct" id="O09012">
    <property type="molecule type" value="protein"/>
</dbReference>
<dbReference type="Bgee" id="ENSMUSG00000005069">
    <property type="expression patterns" value="Expressed in cortical plate and 262 other cell types or tissues"/>
</dbReference>
<dbReference type="ExpressionAtlas" id="O09012">
    <property type="expression patterns" value="baseline and differential"/>
</dbReference>
<dbReference type="GO" id="GO:0005829">
    <property type="term" value="C:cytosol"/>
    <property type="evidence" value="ECO:0000250"/>
    <property type="project" value="UniProtKB"/>
</dbReference>
<dbReference type="GO" id="GO:0005794">
    <property type="term" value="C:Golgi apparatus"/>
    <property type="evidence" value="ECO:0007669"/>
    <property type="project" value="Ensembl"/>
</dbReference>
<dbReference type="GO" id="GO:0016020">
    <property type="term" value="C:membrane"/>
    <property type="evidence" value="ECO:0007669"/>
    <property type="project" value="Ensembl"/>
</dbReference>
<dbReference type="GO" id="GO:0005739">
    <property type="term" value="C:mitochondrion"/>
    <property type="evidence" value="ECO:0007669"/>
    <property type="project" value="GOC"/>
</dbReference>
<dbReference type="GO" id="GO:0005782">
    <property type="term" value="C:peroxisomal matrix"/>
    <property type="evidence" value="ECO:0000250"/>
    <property type="project" value="UniProtKB"/>
</dbReference>
<dbReference type="GO" id="GO:0005777">
    <property type="term" value="C:peroxisome"/>
    <property type="evidence" value="ECO:0000266"/>
    <property type="project" value="MGI"/>
</dbReference>
<dbReference type="GO" id="GO:0032991">
    <property type="term" value="C:protein-containing complex"/>
    <property type="evidence" value="ECO:0007669"/>
    <property type="project" value="Ensembl"/>
</dbReference>
<dbReference type="GO" id="GO:0005052">
    <property type="term" value="F:peroxisome matrix targeting signal-1 binding"/>
    <property type="evidence" value="ECO:0000250"/>
    <property type="project" value="UniProtKB"/>
</dbReference>
<dbReference type="GO" id="GO:0033328">
    <property type="term" value="F:peroxisome membrane targeting sequence binding"/>
    <property type="evidence" value="ECO:0007669"/>
    <property type="project" value="Ensembl"/>
</dbReference>
<dbReference type="GO" id="GO:0000268">
    <property type="term" value="F:peroxisome targeting sequence binding"/>
    <property type="evidence" value="ECO:0000304"/>
    <property type="project" value="MGI"/>
</dbReference>
<dbReference type="GO" id="GO:0140597">
    <property type="term" value="F:protein carrier chaperone"/>
    <property type="evidence" value="ECO:0000250"/>
    <property type="project" value="UniProtKB"/>
</dbReference>
<dbReference type="GO" id="GO:0031267">
    <property type="term" value="F:small GTPase binding"/>
    <property type="evidence" value="ECO:0007669"/>
    <property type="project" value="Ensembl"/>
</dbReference>
<dbReference type="GO" id="GO:0048468">
    <property type="term" value="P:cell development"/>
    <property type="evidence" value="ECO:0000315"/>
    <property type="project" value="MGI"/>
</dbReference>
<dbReference type="GO" id="GO:0034614">
    <property type="term" value="P:cellular response to reactive oxygen species"/>
    <property type="evidence" value="ECO:0007669"/>
    <property type="project" value="Ensembl"/>
</dbReference>
<dbReference type="GO" id="GO:0021795">
    <property type="term" value="P:cerebral cortex cell migration"/>
    <property type="evidence" value="ECO:0000315"/>
    <property type="project" value="MGI"/>
</dbReference>
<dbReference type="GO" id="GO:0021895">
    <property type="term" value="P:cerebral cortex neuron differentiation"/>
    <property type="evidence" value="ECO:0000315"/>
    <property type="project" value="MGI"/>
</dbReference>
<dbReference type="GO" id="GO:0007029">
    <property type="term" value="P:endoplasmic reticulum organization"/>
    <property type="evidence" value="ECO:0000315"/>
    <property type="project" value="MGI"/>
</dbReference>
<dbReference type="GO" id="GO:0006635">
    <property type="term" value="P:fatty acid beta-oxidation"/>
    <property type="evidence" value="ECO:0000315"/>
    <property type="project" value="MGI"/>
</dbReference>
<dbReference type="GO" id="GO:0006629">
    <property type="term" value="P:lipid metabolic process"/>
    <property type="evidence" value="ECO:0000315"/>
    <property type="project" value="MGI"/>
</dbReference>
<dbReference type="GO" id="GO:0007006">
    <property type="term" value="P:mitochondrial membrane organization"/>
    <property type="evidence" value="ECO:0000315"/>
    <property type="project" value="MGI"/>
</dbReference>
<dbReference type="GO" id="GO:0007005">
    <property type="term" value="P:mitochondrion organization"/>
    <property type="evidence" value="ECO:0000315"/>
    <property type="project" value="MGI"/>
</dbReference>
<dbReference type="GO" id="GO:0031333">
    <property type="term" value="P:negative regulation of protein-containing complex assembly"/>
    <property type="evidence" value="ECO:0007669"/>
    <property type="project" value="Ensembl"/>
</dbReference>
<dbReference type="GO" id="GO:0050905">
    <property type="term" value="P:neuromuscular process"/>
    <property type="evidence" value="ECO:0000315"/>
    <property type="project" value="MGI"/>
</dbReference>
<dbReference type="GO" id="GO:0001764">
    <property type="term" value="P:neuron migration"/>
    <property type="evidence" value="ECO:0000315"/>
    <property type="project" value="MGI"/>
</dbReference>
<dbReference type="GO" id="GO:0007031">
    <property type="term" value="P:peroxisome organization"/>
    <property type="evidence" value="ECO:0000314"/>
    <property type="project" value="MGI"/>
</dbReference>
<dbReference type="GO" id="GO:0000425">
    <property type="term" value="P:pexophagy"/>
    <property type="evidence" value="ECO:0000250"/>
    <property type="project" value="UniProtKB"/>
</dbReference>
<dbReference type="GO" id="GO:0040018">
    <property type="term" value="P:positive regulation of multicellular organism growth"/>
    <property type="evidence" value="ECO:0000315"/>
    <property type="project" value="MGI"/>
</dbReference>
<dbReference type="GO" id="GO:0016558">
    <property type="term" value="P:protein import into peroxisome matrix"/>
    <property type="evidence" value="ECO:0000315"/>
    <property type="project" value="UniProtKB"/>
</dbReference>
<dbReference type="GO" id="GO:0016560">
    <property type="term" value="P:protein import into peroxisome matrix, docking"/>
    <property type="evidence" value="ECO:0007669"/>
    <property type="project" value="Ensembl"/>
</dbReference>
<dbReference type="GO" id="GO:0016562">
    <property type="term" value="P:protein import into peroxisome matrix, receptor recycling"/>
    <property type="evidence" value="ECO:0000250"/>
    <property type="project" value="UniProtKB"/>
</dbReference>
<dbReference type="GO" id="GO:0044721">
    <property type="term" value="P:protein import into peroxisome matrix, substrate release"/>
    <property type="evidence" value="ECO:0000250"/>
    <property type="project" value="UniProtKB"/>
</dbReference>
<dbReference type="GO" id="GO:0045046">
    <property type="term" value="P:protein import into peroxisome membrane"/>
    <property type="evidence" value="ECO:0007669"/>
    <property type="project" value="Ensembl"/>
</dbReference>
<dbReference type="GO" id="GO:0006625">
    <property type="term" value="P:protein targeting to peroxisome"/>
    <property type="evidence" value="ECO:0000250"/>
    <property type="project" value="UniProtKB"/>
</dbReference>
<dbReference type="GO" id="GO:0000038">
    <property type="term" value="P:very long-chain fatty acid metabolic process"/>
    <property type="evidence" value="ECO:0000315"/>
    <property type="project" value="MGI"/>
</dbReference>
<dbReference type="FunFam" id="1.25.40.10:FF:000034">
    <property type="entry name" value="Peroxisomal biogenesis factor 5 isoform 1"/>
    <property type="match status" value="1"/>
</dbReference>
<dbReference type="Gene3D" id="1.25.40.10">
    <property type="entry name" value="Tetratricopeptide repeat domain"/>
    <property type="match status" value="1"/>
</dbReference>
<dbReference type="InterPro" id="IPR024111">
    <property type="entry name" value="PEX5/PEX5L"/>
</dbReference>
<dbReference type="InterPro" id="IPR011990">
    <property type="entry name" value="TPR-like_helical_dom_sf"/>
</dbReference>
<dbReference type="InterPro" id="IPR019734">
    <property type="entry name" value="TPR_rpt"/>
</dbReference>
<dbReference type="PANTHER" id="PTHR10130:SF2">
    <property type="entry name" value="PEROXISOMAL TARGETING SIGNAL 1 RECEPTOR"/>
    <property type="match status" value="1"/>
</dbReference>
<dbReference type="PANTHER" id="PTHR10130">
    <property type="entry name" value="PEROXISOMAL TARGETING SIGNAL 1 RECEPTOR PEX5"/>
    <property type="match status" value="1"/>
</dbReference>
<dbReference type="Pfam" id="PF13432">
    <property type="entry name" value="TPR_16"/>
    <property type="match status" value="2"/>
</dbReference>
<dbReference type="Pfam" id="PF13181">
    <property type="entry name" value="TPR_8"/>
    <property type="match status" value="1"/>
</dbReference>
<dbReference type="SMART" id="SM00028">
    <property type="entry name" value="TPR"/>
    <property type="match status" value="4"/>
</dbReference>
<dbReference type="SUPFAM" id="SSF48452">
    <property type="entry name" value="TPR-like"/>
    <property type="match status" value="1"/>
</dbReference>
<dbReference type="PROSITE" id="PS50005">
    <property type="entry name" value="TPR"/>
    <property type="match status" value="5"/>
</dbReference>
<dbReference type="PROSITE" id="PS50293">
    <property type="entry name" value="TPR_REGION"/>
    <property type="match status" value="1"/>
</dbReference>
<protein>
    <recommendedName>
        <fullName evidence="11">Peroxisomal targeting signal 1 receptor</fullName>
        <shortName>PTS1 receptor</shortName>
        <shortName>PTS1R</shortName>
    </recommendedName>
    <alternativeName>
        <fullName>PTS1-BP</fullName>
    </alternativeName>
    <alternativeName>
        <fullName>PXR1P</fullName>
    </alternativeName>
    <alternativeName>
        <fullName evidence="11">Peroxin-5</fullName>
    </alternativeName>
    <alternativeName>
        <fullName>Peroxisomal C-terminal targeting signal import receptor</fullName>
    </alternativeName>
    <alternativeName>
        <fullName>Peroxisome receptor 1</fullName>
    </alternativeName>
</protein>
<comment type="function">
    <text evidence="3">Receptor that mediates peroxisomal import of proteins containing a C-terminal PTS1-type tripeptide peroxisomal targeting signal (SKL-type). Binds to cargo proteins containing a PTS1 peroxisomal targeting signal in the cytosol, and translocates them into the peroxisome matrix by passing through the PEX13-PEX14 docking complex along with cargo proteins. PEX5 receptor is then retrotranslocated into the cytosol, leading to release of bound cargo in the peroxisome matrix, and reset for a subsequent peroxisome import cycle.</text>
</comment>
<comment type="function">
    <molecule>Isoform 1</molecule>
    <text evidence="3">In addition to promoting peroxisomal translocation of proteins containing a PTS1 peroxisomal targeting signal, mediates peroxisomal import of proteins containing a C-terminal PTS2-type peroxisomal targeting signal via its interaction with PEX7. Interaction with PEX7 only takes place when PEX7 is associated with cargo proteins containing a PTS2 peroxisomal targeting signal. PEX7 along with PTS2-containing cargo proteins are then translocated through the PEX13-PEX14 docking complex together with PEX5.</text>
</comment>
<comment type="function">
    <molecule>Isoform 2</molecule>
    <text evidence="3">Does not mediate translocation of peroxisomal import of proteins containing a C-terminal PTS2-type peroxisomal targeting signal.</text>
</comment>
<comment type="activity regulation">
    <text evidence="3">Cys-11 acts as a sensor of redox state. In response to oxidative stress, monoubiquitination at Cys-11 is prevented.</text>
</comment>
<comment type="subunit">
    <text evidence="3">Interacts (via WxxxF/Y and LVxEF motifs) with PEX14; promoting translocation through the PEX13-PEX14 docking complex. Interacts with PEX12. Interacts (Cys-linked ubiquitinated) with ZFAND6. Interacts (when ubiquitinated at Lys-210) with p62/SQSTM1. Interacts with DDO; the interaction is direct and required for localization of DDO to the peroxisome.</text>
</comment>
<comment type="subunit">
    <molecule>Isoform 1</molecule>
    <text evidence="3">Interacts with PEX7, promoting peroxisomal import of proteins containing a C-terminal PTS2-type peroxisomal targeting signal.</text>
</comment>
<comment type="subcellular location">
    <subcellularLocation>
        <location evidence="3">Cytoplasm</location>
        <location evidence="3">Cytosol</location>
    </subcellularLocation>
    <subcellularLocation>
        <location evidence="3">Peroxisome matrix</location>
    </subcellularLocation>
    <text evidence="1 3">Cycles between the cytosol and the peroxisome matrix (By similarity). Following binding to cargo proteins containing a PTS1 peroxisomal targeting signal in the cytosol, recruited to the docking complex, composed of PEX13 and PEX14, leading to translocation into the peroxisome matrix along with cargo proteins. Export and recycling to the cytosol is initiated by binding to the PEX2-PEX10-PEX12 ligase complex via its unstructured N-terminus that inserts into the ligase pore and emerges in the cytosol (By similarity). Cys-11 of PEX5 is then monoubiquitinated, promoting its extraction from peroxisomal membrane by the PEX1-PEX6 AAA ATPase complex (By similarity). Extraction is accompanied by unfolding of the TPR repeats and release of bound cargo in the peroxisome matrix. The TPR repeats refold in the cytosol and ubiquitination is removed by deubiquitinating enzymes, resetting PEX5 for a subsequent import cycle (By similarity).</text>
</comment>
<comment type="alternative products">
    <event type="alternative splicing"/>
    <isoform>
        <id>O09012-1</id>
        <name>1</name>
        <name>Long</name>
        <name evidence="3">PEX5L</name>
        <sequence type="displayed"/>
    </isoform>
    <isoform>
        <id>O09012-2</id>
        <name>2</name>
        <name evidence="3">PEX5S</name>
        <sequence type="described" ref="VSP_024107"/>
    </isoform>
</comment>
<comment type="domain">
    <text evidence="3">The TPR repeats mediate interaction with proteins containing a C-terminal PTS1-type tripeptide peroxisomal targeting signal (SKL-type).</text>
</comment>
<comment type="domain">
    <text evidence="3">The WxxxF/Y motifs mediate interaction with PEX14, promoting association with the PEX13-PEX14 docking complex.</text>
</comment>
<comment type="domain">
    <text evidence="1">The amphipathic helix 1 and 2 (AH1 and AH2, respectively) are required for PEX5 retrotranslocation and recycling. AH2 mediates interaction with lumenal side of the PEX2-PEX10-PEX12 ligase complex, while AH1 is required for extraction from peroxisomal membrane by the PEX1-PEX6 AAA ATPase complex.</text>
</comment>
<comment type="PTM">
    <text evidence="2 3">Monoubiquitinated at Cys-11 by PEX2 during PEX5 passage through the retrotranslocation channel (By similarity). Cys-11 monoubiquitination acts as a recognition signal for the PEX1-PEX6 complex and is required for PEX5 extraction and export from peroxisomes. Monoubiquitination at Cys-11 is removed by USP9X in the cytosol, resetting PEX5 for a subsequent import cycle (By similarity). When PEX5 recycling is compromised, polyubiquitinated by PEX10 during its passage through the retrotranslocation channel, leading to its degradation (By similarity). Monoubiquitination at Lys-472 by TRIM37 promotes its stability by preventing its polyubiquitination and degradation by the proteasome. Ubiquitination at Lys-527 is not mediated by the PEX2-PEX10-PEX12 ligase complex and is not related to PEX5 recycling. Monoubiquitinated at Lys-210 by PEX2 following phosphorylation by ATM in response to starvation or reactive oxygen species (ROS), leading to PEX5 recognition by p62/SQSTM1 and induction of pexophagy (By similarity).</text>
</comment>
<comment type="PTM">
    <text evidence="3">Phosphorylated at Ser-141 by ATM in response to reactive oxygen species (ROS), promoting monoubiquitination at Lys-210 and induction of pexophagy.</text>
</comment>
<comment type="disruption phenotype">
    <text evidence="5 6 7">Liver-specific knockout mice display a growth retardation from the third postnatal week resulting in a 30% to 40% lower body weight than control mice at the age of 7 weeks (PubMed:15732085). Thereafter, mice tend to catch up in growth, and by 3 months their weight is not different from control mice (PubMed:15732085). Throughout this period, the mice look healthy, are fertile and liver function is unaffected (PubMed:15732085). However, 10-week-old mutant mice display a severe hepatomegaly due to hypertrophic and hyperplastic hepatocytes (PubMed:15732085). Mutant mice survive but develope extensive liver tumors from 12 months on (PubMed:15732085). Peroxisomes are absent in mutant hepatocytes and multiple ultrastructural alterations are noticed, smooth endoplasmic reticulum proliferation, and accumulation of lipid droplets and lysosomes (PubMed:15732085). Most prominent is the abnormal structure of the inner mitochondrial membrane (PubMed:15732085). This is accompanied by severely reduced activities of complex I, III, and V and a collapse of the mitochondrial inner membrane potential (PubMed:15732085). Liver-specific knockout mice display severely impaired oxidation of 2-methylhexadecanoic acid, the bile acid intermediate trihydroxycholestanoic acid (THCA), and tetradecanedioic acid (PubMed:17442273). In contrast, mitochondrial beta-oxidation rates of palmitate are doubled (PubMed:17442273). Lens-specific knockout mice develop cataracts (PubMed:33389129).</text>
</comment>
<comment type="similarity">
    <text evidence="11">Belongs to the peroxisomal targeting signal receptor family.</text>
</comment>
<organism>
    <name type="scientific">Mus musculus</name>
    <name type="common">Mouse</name>
    <dbReference type="NCBI Taxonomy" id="10090"/>
    <lineage>
        <taxon>Eukaryota</taxon>
        <taxon>Metazoa</taxon>
        <taxon>Chordata</taxon>
        <taxon>Craniata</taxon>
        <taxon>Vertebrata</taxon>
        <taxon>Euteleostomi</taxon>
        <taxon>Mammalia</taxon>
        <taxon>Eutheria</taxon>
        <taxon>Euarchontoglires</taxon>
        <taxon>Glires</taxon>
        <taxon>Rodentia</taxon>
        <taxon>Myomorpha</taxon>
        <taxon>Muroidea</taxon>
        <taxon>Muridae</taxon>
        <taxon>Murinae</taxon>
        <taxon>Mus</taxon>
        <taxon>Mus</taxon>
    </lineage>
</organism>
<evidence type="ECO:0000250" key="1">
    <source>
        <dbReference type="UniProtKB" id="A0A1L8FDW4"/>
    </source>
</evidence>
<evidence type="ECO:0000250" key="2">
    <source>
        <dbReference type="UniProtKB" id="P35056"/>
    </source>
</evidence>
<evidence type="ECO:0000250" key="3">
    <source>
        <dbReference type="UniProtKB" id="P50542"/>
    </source>
</evidence>
<evidence type="ECO:0000250" key="4">
    <source>
        <dbReference type="UniProtKB" id="Q920N5"/>
    </source>
</evidence>
<evidence type="ECO:0000269" key="5">
    <source>
    </source>
</evidence>
<evidence type="ECO:0000269" key="6">
    <source>
    </source>
</evidence>
<evidence type="ECO:0000269" key="7">
    <source>
    </source>
</evidence>
<evidence type="ECO:0000303" key="8">
    <source>
    </source>
</evidence>
<evidence type="ECO:0000303" key="9">
    <source>
    </source>
</evidence>
<evidence type="ECO:0000303" key="10">
    <source ref="2"/>
</evidence>
<evidence type="ECO:0000305" key="11"/>
<evidence type="ECO:0000312" key="12">
    <source>
        <dbReference type="MGI" id="MGI:1098808"/>
    </source>
</evidence>
<name>PEX5_MOUSE</name>
<sequence>MAMRELVEGECGGANPLMKLATHFTQDKALRQEGLRPGPWPPGASAAETVSKPLGVGTEDELVSEFLQDQNATLVSRAPQTFKMDDLLAEMQEIEQSNFRQAPQRAPGVADLALSENWAQEFLAAGDAVDVAQDYNETDWSQEFIAEVTDPLSVSPARWAEEYLEQSEEKLWLGDQEGSSTADRWYDEYHPEEDLQHTASDFVSKVDDPKLANSEFLKFVRQIGEGQVSLESAAGSGGAQAEQWAAEFIQQQGTSEAWVDQFTRPGNKIAALQVEFERAKSAIESDVDFWDKLQAELEEMAKRDAEAHPWLSDYDDLTSASYDKGYQFEEENPLRDHPQPFEEGLHRLEEGDLPNAVLLFEAAVQQDPKHMEAWQYLGTTQAENEQELLAISALRRCLELKPDNRTALMALAVSFTNESLQRQACETLRDWLRYSPAYAHLVAPGEEGATGAGPSKRILGSLLSDSLFLEVKDLFLAAVRLDPTSIDPDVQCGLGVLFNLSGEYDKAVDCFTAALSVRPNDYLMWNKLGATLANGNQSEEAVAAYRRALELQPGYIRSRYNLGISCINLGAHREAVEHFLEALNMQRKSRGPRGEGGAMSENIWSTLRLALSMLGQSDAYGAADARDLSALLAMFGLPQ</sequence>
<keyword id="KW-0025">Alternative splicing</keyword>
<keyword id="KW-0963">Cytoplasm</keyword>
<keyword id="KW-1017">Isopeptide bond</keyword>
<keyword id="KW-0576">Peroxisome</keyword>
<keyword id="KW-0597">Phosphoprotein</keyword>
<keyword id="KW-0653">Protein transport</keyword>
<keyword id="KW-1185">Reference proteome</keyword>
<keyword id="KW-0677">Repeat</keyword>
<keyword id="KW-0882">Thioester bond</keyword>
<keyword id="KW-0802">TPR repeat</keyword>
<keyword id="KW-0811">Translocation</keyword>
<keyword id="KW-0813">Transport</keyword>
<keyword id="KW-0832">Ubl conjugation</keyword>
<accession>O09012</accession>
<accession>Q3UM58</accession>
<accession>Q8K2V5</accession>
<accession>Q91YC7</accession>
<feature type="chain" id="PRO_0000106306" description="Peroxisomal targeting signal 1 receptor">
    <location>
        <begin position="1"/>
        <end position="639"/>
    </location>
</feature>
<feature type="repeat" description="TPR 1">
    <location>
        <begin position="337"/>
        <end position="370"/>
    </location>
</feature>
<feature type="repeat" description="TPR 2">
    <location>
        <begin position="371"/>
        <end position="404"/>
    </location>
</feature>
<feature type="repeat" description="TPR 3">
    <location>
        <begin position="405"/>
        <end position="438"/>
    </location>
</feature>
<feature type="repeat" description="TPR 4">
    <location>
        <begin position="452"/>
        <end position="485"/>
    </location>
</feature>
<feature type="repeat" description="TPR 5">
    <location>
        <begin position="488"/>
        <end position="521"/>
    </location>
</feature>
<feature type="repeat" description="TPR 6">
    <location>
        <begin position="522"/>
        <end position="555"/>
    </location>
</feature>
<feature type="repeat" description="TPR 7">
    <location>
        <begin position="556"/>
        <end position="589"/>
    </location>
</feature>
<feature type="region of interest" description="Amphipathic helix 1 (AH1)" evidence="1">
    <location>
        <begin position="11"/>
        <end position="33"/>
    </location>
</feature>
<feature type="region of interest" description="Amphipathic helix 2 (AH2)" evidence="1">
    <location>
        <begin position="81"/>
        <end position="99"/>
    </location>
</feature>
<feature type="region of interest" description="Amphipathic helix 3 (AH3)" evidence="1">
    <location>
        <begin position="191"/>
        <end position="207"/>
    </location>
</feature>
<feature type="region of interest" description="Amphipathic helix 4 (AH4)" evidence="1">
    <location>
        <begin position="286"/>
        <end position="302"/>
    </location>
</feature>
<feature type="short sequence motif" description="LVxEF motif" evidence="3">
    <location>
        <begin position="62"/>
        <end position="66"/>
    </location>
</feature>
<feature type="short sequence motif" description="WxxxF/Y motif 1" evidence="1">
    <location>
        <begin position="118"/>
        <end position="122"/>
    </location>
</feature>
<feature type="short sequence motif" description="WxxxF/Y motif 2" evidence="1">
    <location>
        <begin position="140"/>
        <end position="144"/>
    </location>
</feature>
<feature type="short sequence motif" description="WxxxF/Y motif 3" evidence="1">
    <location>
        <begin position="159"/>
        <end position="163"/>
    </location>
</feature>
<feature type="short sequence motif" description="WxxxF/Y motif 4" evidence="1">
    <location>
        <begin position="185"/>
        <end position="189"/>
    </location>
</feature>
<feature type="short sequence motif" description="WxxxF/Y motif 5" evidence="1">
    <location>
        <begin position="244"/>
        <end position="248"/>
    </location>
</feature>
<feature type="short sequence motif" description="WxxxF/Y motif 6" evidence="1">
    <location>
        <begin position="258"/>
        <end position="262"/>
    </location>
</feature>
<feature type="short sequence motif" description="WxxxF/Y motif 7" evidence="1">
    <location>
        <begin position="310"/>
        <end position="314"/>
    </location>
</feature>
<feature type="site" description="Sensor of redox state" evidence="3">
    <location>
        <position position="11"/>
    </location>
</feature>
<feature type="modified residue" description="Phosphoserine" evidence="3">
    <location>
        <position position="115"/>
    </location>
</feature>
<feature type="modified residue" description="Phosphoserine" evidence="3">
    <location>
        <position position="141"/>
    </location>
</feature>
<feature type="modified residue" description="Phosphoserine" evidence="3">
    <location>
        <position position="153"/>
    </location>
</feature>
<feature type="modified residue" description="Phosphoserine" evidence="3">
    <location>
        <position position="155"/>
    </location>
</feature>
<feature type="modified residue" description="Phosphoserine" evidence="3">
    <location>
        <position position="167"/>
    </location>
</feature>
<feature type="modified residue" description="Phosphoserine" evidence="3">
    <location>
        <position position="281"/>
    </location>
</feature>
<feature type="cross-link" description="Glycyl cysteine thioester (Cys-Gly) (interchain with G-Cter in ubiquitin)" evidence="4">
    <location>
        <position position="11"/>
    </location>
</feature>
<feature type="cross-link" description="Glycyl lysine isopeptide (Lys-Gly) (interchain with G-Cter in ubiquitin)" evidence="3">
    <location>
        <position position="210"/>
    </location>
</feature>
<feature type="cross-link" description="Glycyl lysine isopeptide (Lys-Gly) (interchain with G-Cter in ubiquitin)" evidence="3">
    <location>
        <position position="472"/>
    </location>
</feature>
<feature type="cross-link" description="Glycyl lysine isopeptide (Lys-Gly) (interchain with G-Cter in ubiquitin)" evidence="3">
    <location>
        <position position="527"/>
    </location>
</feature>
<feature type="splice variant" id="VSP_024107" description="In isoform 2." evidence="9 10">
    <location>
        <begin position="216"/>
        <end position="252"/>
    </location>
</feature>
<feature type="sequence conflict" description="In Ref. 1; CAB09694." evidence="11" ref="1">
    <original>D</original>
    <variation>H</variation>
    <location>
        <position position="139"/>
    </location>
</feature>
<feature type="sequence conflict" description="In Ref. 1; CAB09694." evidence="11" ref="1">
    <original>D</original>
    <variation>G</variation>
    <location>
        <position position="150"/>
    </location>
</feature>
<feature type="sequence conflict" description="In Ref. 1; CAB09694." evidence="11" ref="1">
    <original>S</original>
    <variation>F</variation>
    <location>
        <position position="179"/>
    </location>
</feature>
<feature type="sequence conflict" description="In Ref. 1; CAB09694." evidence="11" ref="1">
    <original>D</original>
    <variation>N</variation>
    <location>
        <position position="207"/>
    </location>
</feature>
<feature type="sequence conflict" description="In Ref. 1; CAB09694." evidence="11" ref="1">
    <original>Q</original>
    <variation>R</variation>
    <location>
        <position position="366"/>
    </location>
</feature>
<feature type="sequence conflict" description="In Ref. 1; CAB09694." evidence="11" ref="1">
    <original>H</original>
    <variation>N</variation>
    <location>
        <position position="370"/>
    </location>
</feature>
<feature type="sequence conflict" description="In Ref. 1; CAB09694." evidence="11" ref="1">
    <original>Y</original>
    <variation>S</variation>
    <location>
        <position position="376"/>
    </location>
</feature>
<feature type="sequence conflict" description="In Ref. 2; BAE26240." evidence="11" ref="2">
    <original>D</original>
    <variation>E</variation>
    <location>
        <position position="473"/>
    </location>
</feature>
<feature type="sequence conflict" description="In Ref. 2; BAE26240." evidence="11" ref="2">
    <original>M</original>
    <variation>L</variation>
    <location>
        <position position="524"/>
    </location>
</feature>
<reference key="1">
    <citation type="journal article" date="1997" name="Nat. Genet.">
        <title>A mouse model for Zellweger syndrome.</title>
        <authorList>
            <person name="Baes M.I."/>
            <person name="Gressens P."/>
            <person name="Baumgart E."/>
            <person name="Carmeliet P."/>
            <person name="Casteels M."/>
            <person name="Fransen M."/>
            <person name="Evrard P."/>
            <person name="Fahimi D."/>
            <person name="Declercq P."/>
            <person name="Collen D."/>
            <person name="Vanveldhoven P."/>
            <person name="Mannaerts G.P."/>
        </authorList>
    </citation>
    <scope>NUCLEOTIDE SEQUENCE [MRNA] (ISOFORM 1)</scope>
</reference>
<reference key="2">
    <citation type="submission" date="2001-10" db="EMBL/GenBank/DDBJ databases">
        <title>Studies on mammalian peroxines.</title>
        <authorList>
            <person name="Van Veldhoven P.P."/>
        </authorList>
    </citation>
    <scope>NUCLEOTIDE SEQUENCE [MRNA] (ISOFORM 2)</scope>
</reference>
<reference key="3">
    <citation type="journal article" date="2005" name="Science">
        <title>The transcriptional landscape of the mammalian genome.</title>
        <authorList>
            <person name="Carninci P."/>
            <person name="Kasukawa T."/>
            <person name="Katayama S."/>
            <person name="Gough J."/>
            <person name="Frith M.C."/>
            <person name="Maeda N."/>
            <person name="Oyama R."/>
            <person name="Ravasi T."/>
            <person name="Lenhard B."/>
            <person name="Wells C."/>
            <person name="Kodzius R."/>
            <person name="Shimokawa K."/>
            <person name="Bajic V.B."/>
            <person name="Brenner S.E."/>
            <person name="Batalov S."/>
            <person name="Forrest A.R."/>
            <person name="Zavolan M."/>
            <person name="Davis M.J."/>
            <person name="Wilming L.G."/>
            <person name="Aidinis V."/>
            <person name="Allen J.E."/>
            <person name="Ambesi-Impiombato A."/>
            <person name="Apweiler R."/>
            <person name="Aturaliya R.N."/>
            <person name="Bailey T.L."/>
            <person name="Bansal M."/>
            <person name="Baxter L."/>
            <person name="Beisel K.W."/>
            <person name="Bersano T."/>
            <person name="Bono H."/>
            <person name="Chalk A.M."/>
            <person name="Chiu K.P."/>
            <person name="Choudhary V."/>
            <person name="Christoffels A."/>
            <person name="Clutterbuck D.R."/>
            <person name="Crowe M.L."/>
            <person name="Dalla E."/>
            <person name="Dalrymple B.P."/>
            <person name="de Bono B."/>
            <person name="Della Gatta G."/>
            <person name="di Bernardo D."/>
            <person name="Down T."/>
            <person name="Engstrom P."/>
            <person name="Fagiolini M."/>
            <person name="Faulkner G."/>
            <person name="Fletcher C.F."/>
            <person name="Fukushima T."/>
            <person name="Furuno M."/>
            <person name="Futaki S."/>
            <person name="Gariboldi M."/>
            <person name="Georgii-Hemming P."/>
            <person name="Gingeras T.R."/>
            <person name="Gojobori T."/>
            <person name="Green R.E."/>
            <person name="Gustincich S."/>
            <person name="Harbers M."/>
            <person name="Hayashi Y."/>
            <person name="Hensch T.K."/>
            <person name="Hirokawa N."/>
            <person name="Hill D."/>
            <person name="Huminiecki L."/>
            <person name="Iacono M."/>
            <person name="Ikeo K."/>
            <person name="Iwama A."/>
            <person name="Ishikawa T."/>
            <person name="Jakt M."/>
            <person name="Kanapin A."/>
            <person name="Katoh M."/>
            <person name="Kawasawa Y."/>
            <person name="Kelso J."/>
            <person name="Kitamura H."/>
            <person name="Kitano H."/>
            <person name="Kollias G."/>
            <person name="Krishnan S.P."/>
            <person name="Kruger A."/>
            <person name="Kummerfeld S.K."/>
            <person name="Kurochkin I.V."/>
            <person name="Lareau L.F."/>
            <person name="Lazarevic D."/>
            <person name="Lipovich L."/>
            <person name="Liu J."/>
            <person name="Liuni S."/>
            <person name="McWilliam S."/>
            <person name="Madan Babu M."/>
            <person name="Madera M."/>
            <person name="Marchionni L."/>
            <person name="Matsuda H."/>
            <person name="Matsuzawa S."/>
            <person name="Miki H."/>
            <person name="Mignone F."/>
            <person name="Miyake S."/>
            <person name="Morris K."/>
            <person name="Mottagui-Tabar S."/>
            <person name="Mulder N."/>
            <person name="Nakano N."/>
            <person name="Nakauchi H."/>
            <person name="Ng P."/>
            <person name="Nilsson R."/>
            <person name="Nishiguchi S."/>
            <person name="Nishikawa S."/>
            <person name="Nori F."/>
            <person name="Ohara O."/>
            <person name="Okazaki Y."/>
            <person name="Orlando V."/>
            <person name="Pang K.C."/>
            <person name="Pavan W.J."/>
            <person name="Pavesi G."/>
            <person name="Pesole G."/>
            <person name="Petrovsky N."/>
            <person name="Piazza S."/>
            <person name="Reed J."/>
            <person name="Reid J.F."/>
            <person name="Ring B.Z."/>
            <person name="Ringwald M."/>
            <person name="Rost B."/>
            <person name="Ruan Y."/>
            <person name="Salzberg S.L."/>
            <person name="Sandelin A."/>
            <person name="Schneider C."/>
            <person name="Schoenbach C."/>
            <person name="Sekiguchi K."/>
            <person name="Semple C.A."/>
            <person name="Seno S."/>
            <person name="Sessa L."/>
            <person name="Sheng Y."/>
            <person name="Shibata Y."/>
            <person name="Shimada H."/>
            <person name="Shimada K."/>
            <person name="Silva D."/>
            <person name="Sinclair B."/>
            <person name="Sperling S."/>
            <person name="Stupka E."/>
            <person name="Sugiura K."/>
            <person name="Sultana R."/>
            <person name="Takenaka Y."/>
            <person name="Taki K."/>
            <person name="Tammoja K."/>
            <person name="Tan S.L."/>
            <person name="Tang S."/>
            <person name="Taylor M.S."/>
            <person name="Tegner J."/>
            <person name="Teichmann S.A."/>
            <person name="Ueda H.R."/>
            <person name="van Nimwegen E."/>
            <person name="Verardo R."/>
            <person name="Wei C.L."/>
            <person name="Yagi K."/>
            <person name="Yamanishi H."/>
            <person name="Zabarovsky E."/>
            <person name="Zhu S."/>
            <person name="Zimmer A."/>
            <person name="Hide W."/>
            <person name="Bult C."/>
            <person name="Grimmond S.M."/>
            <person name="Teasdale R.D."/>
            <person name="Liu E.T."/>
            <person name="Brusic V."/>
            <person name="Quackenbush J."/>
            <person name="Wahlestedt C."/>
            <person name="Mattick J.S."/>
            <person name="Hume D.A."/>
            <person name="Kai C."/>
            <person name="Sasaki D."/>
            <person name="Tomaru Y."/>
            <person name="Fukuda S."/>
            <person name="Kanamori-Katayama M."/>
            <person name="Suzuki M."/>
            <person name="Aoki J."/>
            <person name="Arakawa T."/>
            <person name="Iida J."/>
            <person name="Imamura K."/>
            <person name="Itoh M."/>
            <person name="Kato T."/>
            <person name="Kawaji H."/>
            <person name="Kawagashira N."/>
            <person name="Kawashima T."/>
            <person name="Kojima M."/>
            <person name="Kondo S."/>
            <person name="Konno H."/>
            <person name="Nakano K."/>
            <person name="Ninomiya N."/>
            <person name="Nishio T."/>
            <person name="Okada M."/>
            <person name="Plessy C."/>
            <person name="Shibata K."/>
            <person name="Shiraki T."/>
            <person name="Suzuki S."/>
            <person name="Tagami M."/>
            <person name="Waki K."/>
            <person name="Watahiki A."/>
            <person name="Okamura-Oho Y."/>
            <person name="Suzuki H."/>
            <person name="Kawai J."/>
            <person name="Hayashizaki Y."/>
        </authorList>
    </citation>
    <scope>NUCLEOTIDE SEQUENCE [LARGE SCALE MRNA] (ISOFORMS 1 AND 2)</scope>
    <source>
        <tissue>Mammary gland</tissue>
    </source>
</reference>
<reference key="4">
    <citation type="journal article" date="2004" name="Genome Res.">
        <title>The status, quality, and expansion of the NIH full-length cDNA project: the Mammalian Gene Collection (MGC).</title>
        <authorList>
            <consortium name="The MGC Project Team"/>
        </authorList>
    </citation>
    <scope>NUCLEOTIDE SEQUENCE [LARGE SCALE MRNA] (ISOFORM 1)</scope>
    <source>
        <strain>FVB/N</strain>
        <tissue>Mammary tumor</tissue>
    </source>
</reference>
<reference key="5">
    <citation type="journal article" date="2010" name="Cell">
        <title>A tissue-specific atlas of mouse protein phosphorylation and expression.</title>
        <authorList>
            <person name="Huttlin E.L."/>
            <person name="Jedrychowski M.P."/>
            <person name="Elias J.E."/>
            <person name="Goswami T."/>
            <person name="Rad R."/>
            <person name="Beausoleil S.A."/>
            <person name="Villen J."/>
            <person name="Haas W."/>
            <person name="Sowa M.E."/>
            <person name="Gygi S.P."/>
        </authorList>
    </citation>
    <scope>IDENTIFICATION BY MASS SPECTROMETRY [LARGE SCALE ANALYSIS]</scope>
    <source>
        <tissue>Brain</tissue>
        <tissue>Brown adipose tissue</tissue>
        <tissue>Kidney</tissue>
        <tissue>Liver</tissue>
        <tissue>Lung</tissue>
        <tissue>Pancreas</tissue>
        <tissue>Spleen</tissue>
        <tissue>Testis</tissue>
    </source>
</reference>
<reference key="6">
    <citation type="journal article" date="2005" name="Hepatology">
        <title>Absence of peroxisomes in mouse hepatocytes causes mitochondrial and ER abnormalities.</title>
        <authorList>
            <person name="Dirkx R."/>
            <person name="Vanhorebeek I."/>
            <person name="Martens K."/>
            <person name="Schad A."/>
            <person name="Grabenbauer M."/>
            <person name="Fahimi D."/>
            <person name="Declercq P."/>
            <person name="Van Veldhoven P.P."/>
            <person name="Baes M."/>
        </authorList>
    </citation>
    <scope>DISRUPTION PHENOTYPE</scope>
</reference>
<reference key="7">
    <citation type="journal article" date="2007" name="Biochem. Biophys. Res. Commun.">
        <title>Beta-oxidation in hepatocyte cultures from mice with peroxisomal gene knockouts.</title>
        <authorList>
            <person name="Dirkx R."/>
            <person name="Meyhi E."/>
            <person name="Asselberghs S."/>
            <person name="Reddy J."/>
            <person name="Baes M."/>
            <person name="Van Veldhoven P.P."/>
        </authorList>
    </citation>
    <scope>DISRUPTION PHENOTYPE</scope>
</reference>
<reference key="8">
    <citation type="journal article" date="2021" name="Hum. Genet.">
        <title>A missense allele of PEX5 is responsible for the defective import of PTS2 cargo proteins into peroxisomes.</title>
        <authorList>
            <person name="Ali M."/>
            <person name="Khan S.Y."/>
            <person name="Rodrigues T.A."/>
            <person name="Francisco T."/>
            <person name="Jiao X."/>
            <person name="Qi H."/>
            <person name="Kabir F."/>
            <person name="Irum B."/>
            <person name="Rauf B."/>
            <person name="Khan A.A."/>
            <person name="Mehmood A."/>
            <person name="Naeem M.A."/>
            <person name="Assir M.Z."/>
            <person name="Ali M.H."/>
            <person name="Shahzad M."/>
            <person name="Abu-Amero K.K."/>
            <person name="Akram S.J."/>
            <person name="Akram J."/>
            <person name="Riazuddin S."/>
            <person name="Riazuddin S."/>
            <person name="Robinson M.L."/>
            <person name="Baes M."/>
            <person name="Azevedo J.E."/>
            <person name="Hejtmancik J.F."/>
            <person name="Riazuddin S.A."/>
        </authorList>
    </citation>
    <scope>DISRUPTION PHENOTYPE</scope>
</reference>
<gene>
    <name evidence="8 12" type="primary">Pex5</name>
    <name type="synonym">Pxr1</name>
</gene>
<proteinExistence type="evidence at protein level"/>